<proteinExistence type="evidence at protein level"/>
<reference key="1">
    <citation type="journal article" date="1998" name="Science">
        <title>Complete genome sequence of Treponema pallidum, the syphilis spirochete.</title>
        <authorList>
            <person name="Fraser C.M."/>
            <person name="Norris S.J."/>
            <person name="Weinstock G.M."/>
            <person name="White O."/>
            <person name="Sutton G.G."/>
            <person name="Dodson R.J."/>
            <person name="Gwinn M.L."/>
            <person name="Hickey E.K."/>
            <person name="Clayton R.A."/>
            <person name="Ketchum K.A."/>
            <person name="Sodergren E."/>
            <person name="Hardham J.M."/>
            <person name="McLeod M.P."/>
            <person name="Salzberg S.L."/>
            <person name="Peterson J.D."/>
            <person name="Khalak H.G."/>
            <person name="Richardson D.L."/>
            <person name="Howell J.K."/>
            <person name="Chidambaram M."/>
            <person name="Utterback T.R."/>
            <person name="McDonald L.A."/>
            <person name="Artiach P."/>
            <person name="Bowman C."/>
            <person name="Cotton M.D."/>
            <person name="Fujii C."/>
            <person name="Garland S.A."/>
            <person name="Hatch B."/>
            <person name="Horst K."/>
            <person name="Roberts K.M."/>
            <person name="Sandusky M."/>
            <person name="Weidman J.F."/>
            <person name="Smith H.O."/>
            <person name="Venter J.C."/>
        </authorList>
    </citation>
    <scope>NUCLEOTIDE SEQUENCE [LARGE SCALE GENOMIC DNA]</scope>
    <source>
        <strain>Nichols</strain>
    </source>
</reference>
<sequence length="323" mass="36005">MKHPSVRVCCFAFASCLLCAGCSLKRLAFSSLSHTLAPFPEGELDAHLSDADFTRVFTEEDDLDLVAQSLPLVLKVYEALHLQNPAHRGLSLAVGRLYIMYANAFVQTPAQYLPEDEFEAQNEAYSRARKLYLRGARYALSSLETAYPGFTREVFSGDEQRLHKVLSRCTRVDVGTLYWVGTGYVAAFALTPLGSALPDTVHAAVMMLERACDLWPSYQEGAVWNVLTKFYAAAPESFGGGMEKAHTAFEHLTRYCSAHDPDHHITYADALCIPLNNRAGFDEALDRALAIDPESVPHNKLLVILSQKRARWLKAHVQDFFLD</sequence>
<dbReference type="EMBL" id="AE000520">
    <property type="protein sequence ID" value="AAC65922.1"/>
    <property type="molecule type" value="Genomic_DNA"/>
</dbReference>
<dbReference type="PIR" id="G71258">
    <property type="entry name" value="G71258"/>
</dbReference>
<dbReference type="RefSeq" id="WP_010882400.1">
    <property type="nucleotide sequence ID" value="NC_021490.2"/>
</dbReference>
<dbReference type="PDB" id="3U64">
    <property type="method" value="X-ray"/>
    <property type="resolution" value="2.30 A"/>
    <property type="chains" value="A=23-323"/>
</dbReference>
<dbReference type="PDB" id="4DI3">
    <property type="method" value="X-ray"/>
    <property type="resolution" value="3.05 A"/>
    <property type="chains" value="A/B/C=23-323"/>
</dbReference>
<dbReference type="PDB" id="4DI4">
    <property type="method" value="X-ray"/>
    <property type="resolution" value="2.71 A"/>
    <property type="chains" value="A=23-323"/>
</dbReference>
<dbReference type="PDBsum" id="3U64"/>
<dbReference type="PDBsum" id="4DI3"/>
<dbReference type="PDBsum" id="4DI4"/>
<dbReference type="SMR" id="O83922"/>
<dbReference type="IntAct" id="O83922">
    <property type="interactions" value="2"/>
</dbReference>
<dbReference type="STRING" id="243276.TP_0956"/>
<dbReference type="EnsemblBacteria" id="AAC65922">
    <property type="protein sequence ID" value="AAC65922"/>
    <property type="gene ID" value="TP_0956"/>
</dbReference>
<dbReference type="KEGG" id="tpa:TP_0956"/>
<dbReference type="KEGG" id="tpw:TPANIC_0956"/>
<dbReference type="eggNOG" id="ENOG5032WII">
    <property type="taxonomic scope" value="Bacteria"/>
</dbReference>
<dbReference type="HOGENOM" id="CLU_074357_0_0_12"/>
<dbReference type="OrthoDB" id="356798at2"/>
<dbReference type="EvolutionaryTrace" id="O83922"/>
<dbReference type="Proteomes" id="UP000000811">
    <property type="component" value="Chromosome"/>
</dbReference>
<dbReference type="Gene3D" id="1.25.40.920">
    <property type="entry name" value="TRAP transporter T-component"/>
    <property type="match status" value="1"/>
</dbReference>
<dbReference type="InterPro" id="IPR031823">
    <property type="entry name" value="TatT"/>
</dbReference>
<dbReference type="InterPro" id="IPR038537">
    <property type="entry name" value="TatT_sf"/>
</dbReference>
<dbReference type="Pfam" id="PF16811">
    <property type="entry name" value="TAtT"/>
    <property type="match status" value="1"/>
</dbReference>
<evidence type="ECO:0007829" key="1">
    <source>
        <dbReference type="PDB" id="3U64"/>
    </source>
</evidence>
<evidence type="ECO:0007829" key="2">
    <source>
        <dbReference type="PDB" id="4DI3"/>
    </source>
</evidence>
<feature type="chain" id="PRO_0000202363" description="Uncharacterized protein TP_0956">
    <location>
        <begin position="1"/>
        <end position="323"/>
    </location>
</feature>
<feature type="turn" evidence="2">
    <location>
        <begin position="51"/>
        <end position="54"/>
    </location>
</feature>
<feature type="helix" evidence="1">
    <location>
        <begin position="55"/>
        <end position="58"/>
    </location>
</feature>
<feature type="helix" evidence="1">
    <location>
        <begin position="63"/>
        <end position="83"/>
    </location>
</feature>
<feature type="helix" evidence="1">
    <location>
        <begin position="88"/>
        <end position="105"/>
    </location>
</feature>
<feature type="helix" evidence="1">
    <location>
        <begin position="107"/>
        <end position="111"/>
    </location>
</feature>
<feature type="helix" evidence="1">
    <location>
        <begin position="115"/>
        <end position="117"/>
    </location>
</feature>
<feature type="helix" evidence="1">
    <location>
        <begin position="118"/>
        <end position="146"/>
    </location>
</feature>
<feature type="helix" evidence="1">
    <location>
        <begin position="150"/>
        <end position="154"/>
    </location>
</feature>
<feature type="helix" evidence="1">
    <location>
        <begin position="159"/>
        <end position="166"/>
    </location>
</feature>
<feature type="helix" evidence="1">
    <location>
        <begin position="171"/>
        <end position="173"/>
    </location>
</feature>
<feature type="helix" evidence="1">
    <location>
        <begin position="174"/>
        <end position="188"/>
    </location>
</feature>
<feature type="helix" evidence="1">
    <location>
        <begin position="198"/>
        <end position="214"/>
    </location>
</feature>
<feature type="helix" evidence="1">
    <location>
        <begin position="218"/>
        <end position="233"/>
    </location>
</feature>
<feature type="turn" evidence="1">
    <location>
        <begin position="236"/>
        <end position="239"/>
    </location>
</feature>
<feature type="helix" evidence="1">
    <location>
        <begin position="242"/>
        <end position="255"/>
    </location>
</feature>
<feature type="helix" evidence="1">
    <location>
        <begin position="262"/>
        <end position="270"/>
    </location>
</feature>
<feature type="turn" evidence="1">
    <location>
        <begin position="271"/>
        <end position="276"/>
    </location>
</feature>
<feature type="helix" evidence="1">
    <location>
        <begin position="278"/>
        <end position="290"/>
    </location>
</feature>
<feature type="helix" evidence="1">
    <location>
        <begin position="293"/>
        <end position="295"/>
    </location>
</feature>
<feature type="helix" evidence="1">
    <location>
        <begin position="300"/>
        <end position="315"/>
    </location>
</feature>
<feature type="helix" evidence="1">
    <location>
        <begin position="317"/>
        <end position="320"/>
    </location>
</feature>
<protein>
    <recommendedName>
        <fullName>Uncharacterized protein TP_0956</fullName>
    </recommendedName>
</protein>
<keyword id="KW-0002">3D-structure</keyword>
<keyword id="KW-1185">Reference proteome</keyword>
<gene>
    <name type="ordered locus">TP_0956</name>
</gene>
<name>Y956_TREPA</name>
<accession>O83922</accession>
<organism>
    <name type="scientific">Treponema pallidum (strain Nichols)</name>
    <dbReference type="NCBI Taxonomy" id="243276"/>
    <lineage>
        <taxon>Bacteria</taxon>
        <taxon>Pseudomonadati</taxon>
        <taxon>Spirochaetota</taxon>
        <taxon>Spirochaetia</taxon>
        <taxon>Spirochaetales</taxon>
        <taxon>Treponemataceae</taxon>
        <taxon>Treponema</taxon>
    </lineage>
</organism>